<dbReference type="EMBL" id="CP001657">
    <property type="protein sequence ID" value="ACT13605.1"/>
    <property type="molecule type" value="Genomic_DNA"/>
</dbReference>
<dbReference type="RefSeq" id="WP_015840779.1">
    <property type="nucleotide sequence ID" value="NC_012917.1"/>
</dbReference>
<dbReference type="SMR" id="C6D978"/>
<dbReference type="STRING" id="561230.PC1_2574"/>
<dbReference type="GeneID" id="67794570"/>
<dbReference type="KEGG" id="pct:PC1_2574"/>
<dbReference type="eggNOG" id="COG1677">
    <property type="taxonomic scope" value="Bacteria"/>
</dbReference>
<dbReference type="HOGENOM" id="CLU_147249_0_2_6"/>
<dbReference type="OrthoDB" id="8909229at2"/>
<dbReference type="Proteomes" id="UP000002736">
    <property type="component" value="Chromosome"/>
</dbReference>
<dbReference type="GO" id="GO:0009425">
    <property type="term" value="C:bacterial-type flagellum basal body"/>
    <property type="evidence" value="ECO:0007669"/>
    <property type="project" value="UniProtKB-SubCell"/>
</dbReference>
<dbReference type="GO" id="GO:0003774">
    <property type="term" value="F:cytoskeletal motor activity"/>
    <property type="evidence" value="ECO:0007669"/>
    <property type="project" value="InterPro"/>
</dbReference>
<dbReference type="GO" id="GO:0005198">
    <property type="term" value="F:structural molecule activity"/>
    <property type="evidence" value="ECO:0007669"/>
    <property type="project" value="InterPro"/>
</dbReference>
<dbReference type="GO" id="GO:0071973">
    <property type="term" value="P:bacterial-type flagellum-dependent cell motility"/>
    <property type="evidence" value="ECO:0007669"/>
    <property type="project" value="InterPro"/>
</dbReference>
<dbReference type="HAMAP" id="MF_00724">
    <property type="entry name" value="FliE"/>
    <property type="match status" value="1"/>
</dbReference>
<dbReference type="InterPro" id="IPR001624">
    <property type="entry name" value="FliE"/>
</dbReference>
<dbReference type="NCBIfam" id="TIGR00205">
    <property type="entry name" value="fliE"/>
    <property type="match status" value="1"/>
</dbReference>
<dbReference type="PANTHER" id="PTHR34653">
    <property type="match status" value="1"/>
</dbReference>
<dbReference type="PANTHER" id="PTHR34653:SF1">
    <property type="entry name" value="FLAGELLAR HOOK-BASAL BODY COMPLEX PROTEIN FLIE"/>
    <property type="match status" value="1"/>
</dbReference>
<dbReference type="Pfam" id="PF02049">
    <property type="entry name" value="FliE"/>
    <property type="match status" value="1"/>
</dbReference>
<dbReference type="PRINTS" id="PR01006">
    <property type="entry name" value="FLGHOOKFLIE"/>
</dbReference>
<name>FLIE_PECCP</name>
<comment type="subcellular location">
    <subcellularLocation>
        <location evidence="1">Bacterial flagellum basal body</location>
    </subcellularLocation>
</comment>
<comment type="similarity">
    <text evidence="1">Belongs to the FliE family.</text>
</comment>
<evidence type="ECO:0000255" key="1">
    <source>
        <dbReference type="HAMAP-Rule" id="MF_00724"/>
    </source>
</evidence>
<gene>
    <name evidence="1" type="primary">fliE</name>
    <name type="ordered locus">PC1_2574</name>
</gene>
<feature type="chain" id="PRO_1000212724" description="Flagellar hook-basal body complex protein FliE">
    <location>
        <begin position="1"/>
        <end position="104"/>
    </location>
</feature>
<accession>C6D978</accession>
<organism>
    <name type="scientific">Pectobacterium carotovorum subsp. carotovorum (strain PC1)</name>
    <dbReference type="NCBI Taxonomy" id="561230"/>
    <lineage>
        <taxon>Bacteria</taxon>
        <taxon>Pseudomonadati</taxon>
        <taxon>Pseudomonadota</taxon>
        <taxon>Gammaproteobacteria</taxon>
        <taxon>Enterobacterales</taxon>
        <taxon>Pectobacteriaceae</taxon>
        <taxon>Pectobacterium</taxon>
    </lineage>
</organism>
<keyword id="KW-0975">Bacterial flagellum</keyword>
<protein>
    <recommendedName>
        <fullName evidence="1">Flagellar hook-basal body complex protein FliE</fullName>
    </recommendedName>
</protein>
<sequence>MSVQGIDGVLQQMQVKALQASGTPIARPSVEPGFASELKAAIDKISDTQQTARTQAEKFTLGVPGVALNDVMVDLQKSSISMQMGIQVRNKLVSAYQEVMNMSV</sequence>
<reference key="1">
    <citation type="submission" date="2009-07" db="EMBL/GenBank/DDBJ databases">
        <title>Complete sequence of Pectobacterium carotovorum subsp. carotovorum PC1.</title>
        <authorList>
            <consortium name="US DOE Joint Genome Institute"/>
            <person name="Lucas S."/>
            <person name="Copeland A."/>
            <person name="Lapidus A."/>
            <person name="Glavina del Rio T."/>
            <person name="Tice H."/>
            <person name="Bruce D."/>
            <person name="Goodwin L."/>
            <person name="Pitluck S."/>
            <person name="Munk A.C."/>
            <person name="Brettin T."/>
            <person name="Detter J.C."/>
            <person name="Han C."/>
            <person name="Tapia R."/>
            <person name="Larimer F."/>
            <person name="Land M."/>
            <person name="Hauser L."/>
            <person name="Kyrpides N."/>
            <person name="Mikhailova N."/>
            <person name="Balakrishnan V."/>
            <person name="Glasner J."/>
            <person name="Perna N.T."/>
        </authorList>
    </citation>
    <scope>NUCLEOTIDE SEQUENCE [LARGE SCALE GENOMIC DNA]</scope>
    <source>
        <strain>PC1</strain>
    </source>
</reference>
<proteinExistence type="inferred from homology"/>